<reference key="1">
    <citation type="journal article" date="2000" name="Nature">
        <title>Complete DNA sequence of a serogroup A strain of Neisseria meningitidis Z2491.</title>
        <authorList>
            <person name="Parkhill J."/>
            <person name="Achtman M."/>
            <person name="James K.D."/>
            <person name="Bentley S.D."/>
            <person name="Churcher C.M."/>
            <person name="Klee S.R."/>
            <person name="Morelli G."/>
            <person name="Basham D."/>
            <person name="Brown D."/>
            <person name="Chillingworth T."/>
            <person name="Davies R.M."/>
            <person name="Davis P."/>
            <person name="Devlin K."/>
            <person name="Feltwell T."/>
            <person name="Hamlin N."/>
            <person name="Holroyd S."/>
            <person name="Jagels K."/>
            <person name="Leather S."/>
            <person name="Moule S."/>
            <person name="Mungall K.L."/>
            <person name="Quail M.A."/>
            <person name="Rajandream M.A."/>
            <person name="Rutherford K.M."/>
            <person name="Simmonds M."/>
            <person name="Skelton J."/>
            <person name="Whitehead S."/>
            <person name="Spratt B.G."/>
            <person name="Barrell B.G."/>
        </authorList>
    </citation>
    <scope>NUCLEOTIDE SEQUENCE [LARGE SCALE GENOMIC DNA]</scope>
    <source>
        <strain>DSM 15465 / Z2491</strain>
    </source>
</reference>
<comment type="function">
    <text evidence="1">Condenses 4-methyl-5-(beta-hydroxyethyl)thiazole monophosphate (THZ-P) and 2-methyl-4-amino-5-hydroxymethyl pyrimidine pyrophosphate (HMP-PP) to form thiamine monophosphate (TMP).</text>
</comment>
<comment type="catalytic activity">
    <reaction evidence="1">
        <text>2-[(2R,5Z)-2-carboxy-4-methylthiazol-5(2H)-ylidene]ethyl phosphate + 4-amino-2-methyl-5-(diphosphooxymethyl)pyrimidine + 2 H(+) = thiamine phosphate + CO2 + diphosphate</text>
        <dbReference type="Rhea" id="RHEA:47844"/>
        <dbReference type="ChEBI" id="CHEBI:15378"/>
        <dbReference type="ChEBI" id="CHEBI:16526"/>
        <dbReference type="ChEBI" id="CHEBI:33019"/>
        <dbReference type="ChEBI" id="CHEBI:37575"/>
        <dbReference type="ChEBI" id="CHEBI:57841"/>
        <dbReference type="ChEBI" id="CHEBI:62899"/>
        <dbReference type="EC" id="2.5.1.3"/>
    </reaction>
</comment>
<comment type="catalytic activity">
    <reaction evidence="1">
        <text>2-(2-carboxy-4-methylthiazol-5-yl)ethyl phosphate + 4-amino-2-methyl-5-(diphosphooxymethyl)pyrimidine + 2 H(+) = thiamine phosphate + CO2 + diphosphate</text>
        <dbReference type="Rhea" id="RHEA:47848"/>
        <dbReference type="ChEBI" id="CHEBI:15378"/>
        <dbReference type="ChEBI" id="CHEBI:16526"/>
        <dbReference type="ChEBI" id="CHEBI:33019"/>
        <dbReference type="ChEBI" id="CHEBI:37575"/>
        <dbReference type="ChEBI" id="CHEBI:57841"/>
        <dbReference type="ChEBI" id="CHEBI:62890"/>
        <dbReference type="EC" id="2.5.1.3"/>
    </reaction>
</comment>
<comment type="catalytic activity">
    <reaction evidence="1">
        <text>4-methyl-5-(2-phosphooxyethyl)-thiazole + 4-amino-2-methyl-5-(diphosphooxymethyl)pyrimidine + H(+) = thiamine phosphate + diphosphate</text>
        <dbReference type="Rhea" id="RHEA:22328"/>
        <dbReference type="ChEBI" id="CHEBI:15378"/>
        <dbReference type="ChEBI" id="CHEBI:33019"/>
        <dbReference type="ChEBI" id="CHEBI:37575"/>
        <dbReference type="ChEBI" id="CHEBI:57841"/>
        <dbReference type="ChEBI" id="CHEBI:58296"/>
        <dbReference type="EC" id="2.5.1.3"/>
    </reaction>
</comment>
<comment type="cofactor">
    <cofactor evidence="1">
        <name>Mg(2+)</name>
        <dbReference type="ChEBI" id="CHEBI:18420"/>
    </cofactor>
    <text evidence="1">Binds 1 Mg(2+) ion per subunit.</text>
</comment>
<comment type="pathway">
    <text evidence="1">Cofactor biosynthesis; thiamine diphosphate biosynthesis; thiamine phosphate from 4-amino-2-methyl-5-diphosphomethylpyrimidine and 4-methyl-5-(2-phosphoethyl)-thiazole: step 1/1.</text>
</comment>
<comment type="similarity">
    <text evidence="1">Belongs to the thiamine-phosphate synthase family.</text>
</comment>
<gene>
    <name evidence="1" type="primary">thiE</name>
    <name type="ordered locus">NMA0363</name>
</gene>
<name>THIE_NEIMA</name>
<organism>
    <name type="scientific">Neisseria meningitidis serogroup A / serotype 4A (strain DSM 15465 / Z2491)</name>
    <dbReference type="NCBI Taxonomy" id="122587"/>
    <lineage>
        <taxon>Bacteria</taxon>
        <taxon>Pseudomonadati</taxon>
        <taxon>Pseudomonadota</taxon>
        <taxon>Betaproteobacteria</taxon>
        <taxon>Neisseriales</taxon>
        <taxon>Neisseriaceae</taxon>
        <taxon>Neisseria</taxon>
    </lineage>
</organism>
<proteinExistence type="inferred from homology"/>
<dbReference type="EC" id="2.5.1.3" evidence="1"/>
<dbReference type="EMBL" id="AL157959">
    <property type="protein sequence ID" value="CAM07659.1"/>
    <property type="molecule type" value="Genomic_DNA"/>
</dbReference>
<dbReference type="PIR" id="E82032">
    <property type="entry name" value="E82032"/>
</dbReference>
<dbReference type="RefSeq" id="WP_002246517.1">
    <property type="nucleotide sequence ID" value="NC_003116.1"/>
</dbReference>
<dbReference type="SMR" id="Q9JWI2"/>
<dbReference type="EnsemblBacteria" id="CAM07659">
    <property type="protein sequence ID" value="CAM07659"/>
    <property type="gene ID" value="NMA0363"/>
</dbReference>
<dbReference type="GeneID" id="93386998"/>
<dbReference type="KEGG" id="nma:NMA0363"/>
<dbReference type="HOGENOM" id="CLU_018272_3_3_4"/>
<dbReference type="UniPathway" id="UPA00060">
    <property type="reaction ID" value="UER00141"/>
</dbReference>
<dbReference type="Proteomes" id="UP000000626">
    <property type="component" value="Chromosome"/>
</dbReference>
<dbReference type="GO" id="GO:0005737">
    <property type="term" value="C:cytoplasm"/>
    <property type="evidence" value="ECO:0007669"/>
    <property type="project" value="TreeGrafter"/>
</dbReference>
<dbReference type="GO" id="GO:0000287">
    <property type="term" value="F:magnesium ion binding"/>
    <property type="evidence" value="ECO:0007669"/>
    <property type="project" value="UniProtKB-UniRule"/>
</dbReference>
<dbReference type="GO" id="GO:0004789">
    <property type="term" value="F:thiamine-phosphate diphosphorylase activity"/>
    <property type="evidence" value="ECO:0007669"/>
    <property type="project" value="UniProtKB-UniRule"/>
</dbReference>
<dbReference type="GO" id="GO:0009228">
    <property type="term" value="P:thiamine biosynthetic process"/>
    <property type="evidence" value="ECO:0007669"/>
    <property type="project" value="UniProtKB-KW"/>
</dbReference>
<dbReference type="GO" id="GO:0009229">
    <property type="term" value="P:thiamine diphosphate biosynthetic process"/>
    <property type="evidence" value="ECO:0007669"/>
    <property type="project" value="UniProtKB-UniRule"/>
</dbReference>
<dbReference type="CDD" id="cd00564">
    <property type="entry name" value="TMP_TenI"/>
    <property type="match status" value="1"/>
</dbReference>
<dbReference type="FunFam" id="3.20.20.70:FF:000064">
    <property type="entry name" value="Thiamine-phosphate synthase"/>
    <property type="match status" value="1"/>
</dbReference>
<dbReference type="Gene3D" id="3.20.20.70">
    <property type="entry name" value="Aldolase class I"/>
    <property type="match status" value="1"/>
</dbReference>
<dbReference type="HAMAP" id="MF_00097">
    <property type="entry name" value="TMP_synthase"/>
    <property type="match status" value="1"/>
</dbReference>
<dbReference type="InterPro" id="IPR013785">
    <property type="entry name" value="Aldolase_TIM"/>
</dbReference>
<dbReference type="InterPro" id="IPR036206">
    <property type="entry name" value="ThiamineP_synth_sf"/>
</dbReference>
<dbReference type="InterPro" id="IPR022998">
    <property type="entry name" value="ThiamineP_synth_TenI"/>
</dbReference>
<dbReference type="InterPro" id="IPR034291">
    <property type="entry name" value="TMP_synthase"/>
</dbReference>
<dbReference type="NCBIfam" id="NF002904">
    <property type="entry name" value="PRK03512.1"/>
    <property type="match status" value="1"/>
</dbReference>
<dbReference type="NCBIfam" id="TIGR00693">
    <property type="entry name" value="thiE"/>
    <property type="match status" value="1"/>
</dbReference>
<dbReference type="PANTHER" id="PTHR20857">
    <property type="entry name" value="THIAMINE-PHOSPHATE PYROPHOSPHORYLASE"/>
    <property type="match status" value="1"/>
</dbReference>
<dbReference type="PANTHER" id="PTHR20857:SF15">
    <property type="entry name" value="THIAMINE-PHOSPHATE SYNTHASE"/>
    <property type="match status" value="1"/>
</dbReference>
<dbReference type="Pfam" id="PF02581">
    <property type="entry name" value="TMP-TENI"/>
    <property type="match status" value="1"/>
</dbReference>
<dbReference type="SUPFAM" id="SSF51391">
    <property type="entry name" value="Thiamin phosphate synthase"/>
    <property type="match status" value="1"/>
</dbReference>
<sequence length="205" mass="21702">MTFLPLKSPLKFYAVVPTADWVERMVEAGADTVQLRCKALHGDELKREIARCVAACQGSHTQLFINDHWREAIEAGAYGVHLGQEDMDTADLAAIAAAGLRLGLSTHSVAELDRALSVHPSYIASGAIFPTTTKQMPTAPQGLDKLREYVKQAGGTPVVAIGGIDLNNARAVLATGVSSLAAVRAVTKAANPEAVVKAFQALWDG</sequence>
<keyword id="KW-0460">Magnesium</keyword>
<keyword id="KW-0479">Metal-binding</keyword>
<keyword id="KW-0784">Thiamine biosynthesis</keyword>
<keyword id="KW-0808">Transferase</keyword>
<protein>
    <recommendedName>
        <fullName evidence="1">Thiamine-phosphate synthase</fullName>
        <shortName evidence="1">TP synthase</shortName>
        <shortName evidence="1">TPS</shortName>
        <ecNumber evidence="1">2.5.1.3</ecNumber>
    </recommendedName>
    <alternativeName>
        <fullName evidence="1">Thiamine-phosphate pyrophosphorylase</fullName>
        <shortName evidence="1">TMP pyrophosphorylase</shortName>
        <shortName evidence="1">TMP-PPase</shortName>
    </alternativeName>
</protein>
<feature type="chain" id="PRO_0000157029" description="Thiamine-phosphate synthase">
    <location>
        <begin position="1"/>
        <end position="205"/>
    </location>
</feature>
<feature type="binding site" evidence="1">
    <location>
        <begin position="34"/>
        <end position="38"/>
    </location>
    <ligand>
        <name>4-amino-2-methyl-5-(diphosphooxymethyl)pyrimidine</name>
        <dbReference type="ChEBI" id="CHEBI:57841"/>
    </ligand>
</feature>
<feature type="binding site" evidence="1">
    <location>
        <position position="66"/>
    </location>
    <ligand>
        <name>4-amino-2-methyl-5-(diphosphooxymethyl)pyrimidine</name>
        <dbReference type="ChEBI" id="CHEBI:57841"/>
    </ligand>
</feature>
<feature type="binding site" evidence="1">
    <location>
        <position position="67"/>
    </location>
    <ligand>
        <name>Mg(2+)</name>
        <dbReference type="ChEBI" id="CHEBI:18420"/>
    </ligand>
</feature>
<feature type="binding site" evidence="1">
    <location>
        <position position="86"/>
    </location>
    <ligand>
        <name>Mg(2+)</name>
        <dbReference type="ChEBI" id="CHEBI:18420"/>
    </ligand>
</feature>
<feature type="binding site" evidence="1">
    <location>
        <position position="105"/>
    </location>
    <ligand>
        <name>4-amino-2-methyl-5-(diphosphooxymethyl)pyrimidine</name>
        <dbReference type="ChEBI" id="CHEBI:57841"/>
    </ligand>
</feature>
<feature type="binding site" evidence="1">
    <location>
        <begin position="131"/>
        <end position="133"/>
    </location>
    <ligand>
        <name>2-[(2R,5Z)-2-carboxy-4-methylthiazol-5(2H)-ylidene]ethyl phosphate</name>
        <dbReference type="ChEBI" id="CHEBI:62899"/>
    </ligand>
</feature>
<feature type="binding site" evidence="1">
    <location>
        <position position="134"/>
    </location>
    <ligand>
        <name>4-amino-2-methyl-5-(diphosphooxymethyl)pyrimidine</name>
        <dbReference type="ChEBI" id="CHEBI:57841"/>
    </ligand>
</feature>
<feature type="binding site" evidence="1">
    <location>
        <position position="163"/>
    </location>
    <ligand>
        <name>2-[(2R,5Z)-2-carboxy-4-methylthiazol-5(2H)-ylidene]ethyl phosphate</name>
        <dbReference type="ChEBI" id="CHEBI:62899"/>
    </ligand>
</feature>
<evidence type="ECO:0000255" key="1">
    <source>
        <dbReference type="HAMAP-Rule" id="MF_00097"/>
    </source>
</evidence>
<accession>Q9JWI2</accession>
<accession>A1IPJ0</accession>